<gene>
    <name evidence="2" type="primary">prfB</name>
    <name type="ordered locus">SAB0706</name>
</gene>
<comment type="function">
    <text evidence="2">Peptide chain release factor 2 directs the termination of translation in response to the peptide chain termination codons UGA and UAA.</text>
</comment>
<comment type="subcellular location">
    <subcellularLocation>
        <location evidence="2">Cytoplasm</location>
    </subcellularLocation>
</comment>
<comment type="PTM">
    <text evidence="2">Methylated by PrmC. Methylation increases the termination efficiency of RF2.</text>
</comment>
<comment type="miscellaneous">
    <text evidence="1">The gene for this protein contains a UGA in-frame termination codon after Leu-24; a naturally occurring frameshift enables complete translation of RF-2. This provides a mechanism for the protein to regulate its own production (By similarity).</text>
</comment>
<comment type="similarity">
    <text evidence="2">Belongs to the prokaryotic/mitochondrial release factor family.</text>
</comment>
<protein>
    <recommendedName>
        <fullName evidence="2">Peptide chain release factor 2</fullName>
        <shortName evidence="2">RF-2</shortName>
    </recommendedName>
</protein>
<dbReference type="EMBL" id="AJ938182">
    <property type="protein sequence ID" value="CAI80394.1"/>
    <property type="status" value="ALT_SEQ"/>
    <property type="molecule type" value="Genomic_DNA"/>
</dbReference>
<dbReference type="SMR" id="Q2YSH5"/>
<dbReference type="KEGG" id="sab:SAB0706"/>
<dbReference type="HOGENOM" id="CLU_036856_6_0_9"/>
<dbReference type="GO" id="GO:0005737">
    <property type="term" value="C:cytoplasm"/>
    <property type="evidence" value="ECO:0007669"/>
    <property type="project" value="UniProtKB-SubCell"/>
</dbReference>
<dbReference type="GO" id="GO:0016149">
    <property type="term" value="F:translation release factor activity, codon specific"/>
    <property type="evidence" value="ECO:0007669"/>
    <property type="project" value="UniProtKB-UniRule"/>
</dbReference>
<dbReference type="GO" id="GO:0075523">
    <property type="term" value="P:viral translational frameshifting"/>
    <property type="evidence" value="ECO:0007669"/>
    <property type="project" value="UniProtKB-KW"/>
</dbReference>
<dbReference type="FunFam" id="3.30.160.20:FF:000010">
    <property type="entry name" value="Peptide chain release factor 2"/>
    <property type="match status" value="1"/>
</dbReference>
<dbReference type="Gene3D" id="3.30.160.20">
    <property type="match status" value="1"/>
</dbReference>
<dbReference type="Gene3D" id="3.30.70.1660">
    <property type="match status" value="1"/>
</dbReference>
<dbReference type="Gene3D" id="1.20.58.410">
    <property type="entry name" value="Release factor"/>
    <property type="match status" value="1"/>
</dbReference>
<dbReference type="HAMAP" id="MF_00094">
    <property type="entry name" value="Rel_fac_2"/>
    <property type="match status" value="1"/>
</dbReference>
<dbReference type="InterPro" id="IPR005139">
    <property type="entry name" value="PCRF"/>
</dbReference>
<dbReference type="InterPro" id="IPR000352">
    <property type="entry name" value="Pep_chain_release_fac_I"/>
</dbReference>
<dbReference type="InterPro" id="IPR045853">
    <property type="entry name" value="Pep_chain_release_fac_I_sf"/>
</dbReference>
<dbReference type="InterPro" id="IPR004374">
    <property type="entry name" value="PrfB"/>
</dbReference>
<dbReference type="NCBIfam" id="TIGR00020">
    <property type="entry name" value="prfB"/>
    <property type="match status" value="1"/>
</dbReference>
<dbReference type="PANTHER" id="PTHR43116:SF3">
    <property type="entry name" value="CLASS I PEPTIDE CHAIN RELEASE FACTOR"/>
    <property type="match status" value="1"/>
</dbReference>
<dbReference type="PANTHER" id="PTHR43116">
    <property type="entry name" value="PEPTIDE CHAIN RELEASE FACTOR 2"/>
    <property type="match status" value="1"/>
</dbReference>
<dbReference type="Pfam" id="PF03462">
    <property type="entry name" value="PCRF"/>
    <property type="match status" value="1"/>
</dbReference>
<dbReference type="Pfam" id="PF00472">
    <property type="entry name" value="RF-1"/>
    <property type="match status" value="1"/>
</dbReference>
<dbReference type="SMART" id="SM00937">
    <property type="entry name" value="PCRF"/>
    <property type="match status" value="1"/>
</dbReference>
<dbReference type="SUPFAM" id="SSF75620">
    <property type="entry name" value="Release factor"/>
    <property type="match status" value="1"/>
</dbReference>
<dbReference type="PROSITE" id="PS00745">
    <property type="entry name" value="RF_PROK_I"/>
    <property type="match status" value="1"/>
</dbReference>
<sequence length="369" mass="42331">MELSEIKRNIDKYNQDLTQIRGSLDLENKETNIQEYEEMMAEPNFWDNQTKAQDIIDKNNALKAIVNGYKTLQAEVDDMDATWDLLQEEFDEEMKEDLEQEVINFKAKVDEYELQLLLDGPHDANNAILELHPGAGGTESQDWANMLFRMYQRYCEKKGFKVETVDYLPGDEAGIKSVTLLIKGHNAYGYLKAEKGVHRLVRISPFDSSGRRHTSFASCDVIPDFNNDEIEIEINPDDITVDTFRASGAGGQHINKTESAIRITHHPSGIVVNNQNERSQIKNREAAMKMLKSKLYQLKLEEQAREMAEIRGEQKEIGWGSQIRSYVFHPYSMVKDHRTNEETGKVDAVMDGDIGPFIESYLRQTMSHD</sequence>
<keyword id="KW-0963">Cytoplasm</keyword>
<keyword id="KW-0488">Methylation</keyword>
<keyword id="KW-0648">Protein biosynthesis</keyword>
<keyword id="KW-0688">Ribosomal frameshifting</keyword>
<feature type="chain" id="PRO_0000249576" description="Peptide chain release factor 2">
    <location>
        <begin position="1"/>
        <end position="369"/>
    </location>
</feature>
<feature type="modified residue" description="N5-methylglutamine" evidence="2">
    <location>
        <position position="252"/>
    </location>
</feature>
<name>RF2_STAAB</name>
<reference key="1">
    <citation type="journal article" date="2007" name="PLoS ONE">
        <title>Molecular correlates of host specialization in Staphylococcus aureus.</title>
        <authorList>
            <person name="Herron-Olson L."/>
            <person name="Fitzgerald J.R."/>
            <person name="Musser J.M."/>
            <person name="Kapur V."/>
        </authorList>
    </citation>
    <scope>NUCLEOTIDE SEQUENCE [LARGE SCALE GENOMIC DNA]</scope>
    <source>
        <strain>bovine RF122 / ET3-1</strain>
    </source>
</reference>
<accession>Q2YSH5</accession>
<evidence type="ECO:0000250" key="1"/>
<evidence type="ECO:0000255" key="2">
    <source>
        <dbReference type="HAMAP-Rule" id="MF_00094"/>
    </source>
</evidence>
<proteinExistence type="inferred from homology"/>
<organism>
    <name type="scientific">Staphylococcus aureus (strain bovine RF122 / ET3-1)</name>
    <dbReference type="NCBI Taxonomy" id="273036"/>
    <lineage>
        <taxon>Bacteria</taxon>
        <taxon>Bacillati</taxon>
        <taxon>Bacillota</taxon>
        <taxon>Bacilli</taxon>
        <taxon>Bacillales</taxon>
        <taxon>Staphylococcaceae</taxon>
        <taxon>Staphylococcus</taxon>
    </lineage>
</organism>